<reference key="1">
    <citation type="submission" date="2007-08" db="EMBL/GenBank/DDBJ databases">
        <title>Complete sequence of Roseiflexus castenholzii DSM 13941.</title>
        <authorList>
            <consortium name="US DOE Joint Genome Institute"/>
            <person name="Copeland A."/>
            <person name="Lucas S."/>
            <person name="Lapidus A."/>
            <person name="Barry K."/>
            <person name="Glavina del Rio T."/>
            <person name="Dalin E."/>
            <person name="Tice H."/>
            <person name="Pitluck S."/>
            <person name="Thompson L.S."/>
            <person name="Brettin T."/>
            <person name="Bruce D."/>
            <person name="Detter J.C."/>
            <person name="Han C."/>
            <person name="Tapia R."/>
            <person name="Schmutz J."/>
            <person name="Larimer F."/>
            <person name="Land M."/>
            <person name="Hauser L."/>
            <person name="Kyrpides N."/>
            <person name="Mikhailova N."/>
            <person name="Bryant D.A."/>
            <person name="Hanada S."/>
            <person name="Tsukatani Y."/>
            <person name="Richardson P."/>
        </authorList>
    </citation>
    <scope>NUCLEOTIDE SEQUENCE [LARGE SCALE GENOMIC DNA]</scope>
    <source>
        <strain>DSM 13941 / HLO8</strain>
    </source>
</reference>
<sequence>MSSRVHKVVLAYSGGLDTSIIVPWLKQNYGNPEVICYCANIGQDDELSGLEAKAIATGASKCYVEDLREEFVRDFLFPLLQSGAVYERTYLLGTSVARPLIARRQAEIALQEGADALAHGCTGKGNDQVRFELTYMAFAPHLKVIAPWREWNIRSREDALDYAAEHNVPVTATLKSIYSRDRNIWHMSHEGGILEDPWQEPEEAMYTLTTAPEAAPDEPEYVTVGFDQGVPVSVNGERLGPVDLLLALNNIGAKHGIGRVDLVENRLVGMKSHGVYETPGGTILRVAHQGLEQLALDRDTLHYKDVIAHRYAELVYYGQWYTPLREALDAFVRVTQRNVTGEARLKLYKGNAMLVGRRAAKSLYNPDIASFTMSDSYNQKDAEGFIKIFGLPVKVQALLEGR</sequence>
<feature type="chain" id="PRO_1000073827" description="Argininosuccinate synthase">
    <location>
        <begin position="1"/>
        <end position="402"/>
    </location>
</feature>
<feature type="binding site" evidence="1">
    <location>
        <begin position="11"/>
        <end position="19"/>
    </location>
    <ligand>
        <name>ATP</name>
        <dbReference type="ChEBI" id="CHEBI:30616"/>
    </ligand>
</feature>
<feature type="binding site" evidence="1">
    <location>
        <position position="39"/>
    </location>
    <ligand>
        <name>ATP</name>
        <dbReference type="ChEBI" id="CHEBI:30616"/>
    </ligand>
</feature>
<feature type="binding site" evidence="1">
    <location>
        <position position="90"/>
    </location>
    <ligand>
        <name>L-citrulline</name>
        <dbReference type="ChEBI" id="CHEBI:57743"/>
    </ligand>
</feature>
<feature type="binding site" evidence="1">
    <location>
        <position position="95"/>
    </location>
    <ligand>
        <name>L-citrulline</name>
        <dbReference type="ChEBI" id="CHEBI:57743"/>
    </ligand>
</feature>
<feature type="binding site" evidence="1">
    <location>
        <position position="120"/>
    </location>
    <ligand>
        <name>ATP</name>
        <dbReference type="ChEBI" id="CHEBI:30616"/>
    </ligand>
</feature>
<feature type="binding site" evidence="1">
    <location>
        <position position="122"/>
    </location>
    <ligand>
        <name>L-aspartate</name>
        <dbReference type="ChEBI" id="CHEBI:29991"/>
    </ligand>
</feature>
<feature type="binding site" evidence="1">
    <location>
        <position position="126"/>
    </location>
    <ligand>
        <name>L-aspartate</name>
        <dbReference type="ChEBI" id="CHEBI:29991"/>
    </ligand>
</feature>
<feature type="binding site" evidence="1">
    <location>
        <position position="126"/>
    </location>
    <ligand>
        <name>L-citrulline</name>
        <dbReference type="ChEBI" id="CHEBI:57743"/>
    </ligand>
</feature>
<feature type="binding site" evidence="1">
    <location>
        <position position="127"/>
    </location>
    <ligand>
        <name>L-aspartate</name>
        <dbReference type="ChEBI" id="CHEBI:29991"/>
    </ligand>
</feature>
<feature type="binding site" evidence="1">
    <location>
        <position position="130"/>
    </location>
    <ligand>
        <name>L-citrulline</name>
        <dbReference type="ChEBI" id="CHEBI:57743"/>
    </ligand>
</feature>
<feature type="binding site" evidence="1">
    <location>
        <position position="179"/>
    </location>
    <ligand>
        <name>L-citrulline</name>
        <dbReference type="ChEBI" id="CHEBI:57743"/>
    </ligand>
</feature>
<feature type="binding site" evidence="1">
    <location>
        <position position="188"/>
    </location>
    <ligand>
        <name>L-citrulline</name>
        <dbReference type="ChEBI" id="CHEBI:57743"/>
    </ligand>
</feature>
<feature type="binding site" evidence="1">
    <location>
        <position position="264"/>
    </location>
    <ligand>
        <name>L-citrulline</name>
        <dbReference type="ChEBI" id="CHEBI:57743"/>
    </ligand>
</feature>
<feature type="binding site" evidence="1">
    <location>
        <position position="276"/>
    </location>
    <ligand>
        <name>L-citrulline</name>
        <dbReference type="ChEBI" id="CHEBI:57743"/>
    </ligand>
</feature>
<gene>
    <name evidence="1" type="primary">argG</name>
    <name type="ordered locus">Rcas_3356</name>
</gene>
<comment type="catalytic activity">
    <reaction evidence="1">
        <text>L-citrulline + L-aspartate + ATP = 2-(N(omega)-L-arginino)succinate + AMP + diphosphate + H(+)</text>
        <dbReference type="Rhea" id="RHEA:10932"/>
        <dbReference type="ChEBI" id="CHEBI:15378"/>
        <dbReference type="ChEBI" id="CHEBI:29991"/>
        <dbReference type="ChEBI" id="CHEBI:30616"/>
        <dbReference type="ChEBI" id="CHEBI:33019"/>
        <dbReference type="ChEBI" id="CHEBI:57472"/>
        <dbReference type="ChEBI" id="CHEBI:57743"/>
        <dbReference type="ChEBI" id="CHEBI:456215"/>
        <dbReference type="EC" id="6.3.4.5"/>
    </reaction>
</comment>
<comment type="pathway">
    <text evidence="1">Amino-acid biosynthesis; L-arginine biosynthesis; L-arginine from L-ornithine and carbamoyl phosphate: step 2/3.</text>
</comment>
<comment type="subunit">
    <text evidence="1">Homotetramer.</text>
</comment>
<comment type="subcellular location">
    <subcellularLocation>
        <location evidence="1">Cytoplasm</location>
    </subcellularLocation>
</comment>
<comment type="similarity">
    <text evidence="1">Belongs to the argininosuccinate synthase family. Type 1 subfamily.</text>
</comment>
<dbReference type="EC" id="6.3.4.5" evidence="1"/>
<dbReference type="EMBL" id="CP000804">
    <property type="protein sequence ID" value="ABU59406.1"/>
    <property type="molecule type" value="Genomic_DNA"/>
</dbReference>
<dbReference type="RefSeq" id="WP_012121830.1">
    <property type="nucleotide sequence ID" value="NC_009767.1"/>
</dbReference>
<dbReference type="SMR" id="A7NPB0"/>
<dbReference type="STRING" id="383372.Rcas_3356"/>
<dbReference type="KEGG" id="rca:Rcas_3356"/>
<dbReference type="eggNOG" id="COG0137">
    <property type="taxonomic scope" value="Bacteria"/>
</dbReference>
<dbReference type="HOGENOM" id="CLU_032784_4_2_0"/>
<dbReference type="OrthoDB" id="9801641at2"/>
<dbReference type="UniPathway" id="UPA00068">
    <property type="reaction ID" value="UER00113"/>
</dbReference>
<dbReference type="Proteomes" id="UP000000263">
    <property type="component" value="Chromosome"/>
</dbReference>
<dbReference type="GO" id="GO:0005737">
    <property type="term" value="C:cytoplasm"/>
    <property type="evidence" value="ECO:0007669"/>
    <property type="project" value="UniProtKB-SubCell"/>
</dbReference>
<dbReference type="GO" id="GO:0004055">
    <property type="term" value="F:argininosuccinate synthase activity"/>
    <property type="evidence" value="ECO:0007669"/>
    <property type="project" value="UniProtKB-UniRule"/>
</dbReference>
<dbReference type="GO" id="GO:0005524">
    <property type="term" value="F:ATP binding"/>
    <property type="evidence" value="ECO:0007669"/>
    <property type="project" value="UniProtKB-UniRule"/>
</dbReference>
<dbReference type="GO" id="GO:0000053">
    <property type="term" value="P:argininosuccinate metabolic process"/>
    <property type="evidence" value="ECO:0007669"/>
    <property type="project" value="TreeGrafter"/>
</dbReference>
<dbReference type="GO" id="GO:0006526">
    <property type="term" value="P:L-arginine biosynthetic process"/>
    <property type="evidence" value="ECO:0007669"/>
    <property type="project" value="UniProtKB-UniRule"/>
</dbReference>
<dbReference type="GO" id="GO:0000050">
    <property type="term" value="P:urea cycle"/>
    <property type="evidence" value="ECO:0007669"/>
    <property type="project" value="TreeGrafter"/>
</dbReference>
<dbReference type="CDD" id="cd01999">
    <property type="entry name" value="ASS"/>
    <property type="match status" value="1"/>
</dbReference>
<dbReference type="FunFam" id="3.40.50.620:FF:000019">
    <property type="entry name" value="Argininosuccinate synthase"/>
    <property type="match status" value="1"/>
</dbReference>
<dbReference type="FunFam" id="3.90.1260.10:FF:000007">
    <property type="entry name" value="Argininosuccinate synthase"/>
    <property type="match status" value="1"/>
</dbReference>
<dbReference type="Gene3D" id="3.90.1260.10">
    <property type="entry name" value="Argininosuccinate synthetase, chain A, domain 2"/>
    <property type="match status" value="1"/>
</dbReference>
<dbReference type="Gene3D" id="3.40.50.620">
    <property type="entry name" value="HUPs"/>
    <property type="match status" value="1"/>
</dbReference>
<dbReference type="Gene3D" id="1.20.5.470">
    <property type="entry name" value="Single helix bin"/>
    <property type="match status" value="1"/>
</dbReference>
<dbReference type="HAMAP" id="MF_00005">
    <property type="entry name" value="Arg_succ_synth_type1"/>
    <property type="match status" value="1"/>
</dbReference>
<dbReference type="InterPro" id="IPR048268">
    <property type="entry name" value="Arginosuc_syn_C"/>
</dbReference>
<dbReference type="InterPro" id="IPR048267">
    <property type="entry name" value="Arginosuc_syn_N"/>
</dbReference>
<dbReference type="InterPro" id="IPR001518">
    <property type="entry name" value="Arginosuc_synth"/>
</dbReference>
<dbReference type="InterPro" id="IPR018223">
    <property type="entry name" value="Arginosuc_synth_CS"/>
</dbReference>
<dbReference type="InterPro" id="IPR023434">
    <property type="entry name" value="Arginosuc_synth_type_1_subfam"/>
</dbReference>
<dbReference type="InterPro" id="IPR024074">
    <property type="entry name" value="AS_cat/multimer_dom_body"/>
</dbReference>
<dbReference type="InterPro" id="IPR014729">
    <property type="entry name" value="Rossmann-like_a/b/a_fold"/>
</dbReference>
<dbReference type="NCBIfam" id="TIGR00032">
    <property type="entry name" value="argG"/>
    <property type="match status" value="1"/>
</dbReference>
<dbReference type="NCBIfam" id="NF001770">
    <property type="entry name" value="PRK00509.1"/>
    <property type="match status" value="1"/>
</dbReference>
<dbReference type="PANTHER" id="PTHR11587">
    <property type="entry name" value="ARGININOSUCCINATE SYNTHASE"/>
    <property type="match status" value="1"/>
</dbReference>
<dbReference type="PANTHER" id="PTHR11587:SF2">
    <property type="entry name" value="ARGININOSUCCINATE SYNTHASE"/>
    <property type="match status" value="1"/>
</dbReference>
<dbReference type="Pfam" id="PF20979">
    <property type="entry name" value="Arginosuc_syn_C"/>
    <property type="match status" value="1"/>
</dbReference>
<dbReference type="Pfam" id="PF00764">
    <property type="entry name" value="Arginosuc_synth"/>
    <property type="match status" value="1"/>
</dbReference>
<dbReference type="SUPFAM" id="SSF52402">
    <property type="entry name" value="Adenine nucleotide alpha hydrolases-like"/>
    <property type="match status" value="1"/>
</dbReference>
<dbReference type="SUPFAM" id="SSF69864">
    <property type="entry name" value="Argininosuccinate synthetase, C-terminal domain"/>
    <property type="match status" value="1"/>
</dbReference>
<dbReference type="PROSITE" id="PS00564">
    <property type="entry name" value="ARGININOSUCCIN_SYN_1"/>
    <property type="match status" value="1"/>
</dbReference>
<dbReference type="PROSITE" id="PS00565">
    <property type="entry name" value="ARGININOSUCCIN_SYN_2"/>
    <property type="match status" value="1"/>
</dbReference>
<evidence type="ECO:0000255" key="1">
    <source>
        <dbReference type="HAMAP-Rule" id="MF_00005"/>
    </source>
</evidence>
<keyword id="KW-0028">Amino-acid biosynthesis</keyword>
<keyword id="KW-0055">Arginine biosynthesis</keyword>
<keyword id="KW-0067">ATP-binding</keyword>
<keyword id="KW-0963">Cytoplasm</keyword>
<keyword id="KW-0436">Ligase</keyword>
<keyword id="KW-0547">Nucleotide-binding</keyword>
<keyword id="KW-1185">Reference proteome</keyword>
<organism>
    <name type="scientific">Roseiflexus castenholzii (strain DSM 13941 / HLO8)</name>
    <dbReference type="NCBI Taxonomy" id="383372"/>
    <lineage>
        <taxon>Bacteria</taxon>
        <taxon>Bacillati</taxon>
        <taxon>Chloroflexota</taxon>
        <taxon>Chloroflexia</taxon>
        <taxon>Chloroflexales</taxon>
        <taxon>Roseiflexineae</taxon>
        <taxon>Roseiflexaceae</taxon>
        <taxon>Roseiflexus</taxon>
    </lineage>
</organism>
<protein>
    <recommendedName>
        <fullName evidence="1">Argininosuccinate synthase</fullName>
        <ecNumber evidence="1">6.3.4.5</ecNumber>
    </recommendedName>
    <alternativeName>
        <fullName evidence="1">Citrulline--aspartate ligase</fullName>
    </alternativeName>
</protein>
<proteinExistence type="inferred from homology"/>
<name>ASSY_ROSCS</name>
<accession>A7NPB0</accession>